<name>ELYA_BACYA</name>
<protein>
    <recommendedName>
        <fullName>Alkaline elastase YaB</fullName>
        <ecNumber>3.4.21.-</ecNumber>
    </recommendedName>
</protein>
<feature type="signal peptide" evidence="2">
    <location>
        <begin position="1"/>
        <end position="27"/>
    </location>
</feature>
<feature type="propeptide" id="PRO_0000027014" evidence="4">
    <location>
        <begin position="28"/>
        <end position="110"/>
    </location>
</feature>
<feature type="chain" id="PRO_0000027015" description="Alkaline elastase YaB">
    <location>
        <begin position="111"/>
        <end position="378"/>
    </location>
</feature>
<feature type="domain" description="Peptidase S8" evidence="3">
    <location>
        <begin position="114"/>
        <end position="377"/>
    </location>
</feature>
<feature type="active site" description="Charge relay system" evidence="3">
    <location>
        <position position="141"/>
    </location>
</feature>
<feature type="active site" description="Charge relay system" evidence="3">
    <location>
        <position position="171"/>
    </location>
</feature>
<feature type="active site" description="Charge relay system" evidence="3">
    <location>
        <position position="324"/>
    </location>
</feature>
<feature type="binding site" evidence="1">
    <location>
        <position position="111"/>
    </location>
    <ligand>
        <name>Ca(2+)</name>
        <dbReference type="ChEBI" id="CHEBI:29108"/>
        <label>1</label>
    </ligand>
</feature>
<feature type="binding site" evidence="1">
    <location>
        <position position="149"/>
    </location>
    <ligand>
        <name>Ca(2+)</name>
        <dbReference type="ChEBI" id="CHEBI:29108"/>
        <label>1</label>
    </ligand>
</feature>
<feature type="binding site" evidence="1">
    <location>
        <position position="182"/>
    </location>
    <ligand>
        <name>Ca(2+)</name>
        <dbReference type="ChEBI" id="CHEBI:29108"/>
        <label>1</label>
    </ligand>
</feature>
<feature type="binding site" evidence="1">
    <location>
        <position position="184"/>
    </location>
    <ligand>
        <name>Ca(2+)</name>
        <dbReference type="ChEBI" id="CHEBI:29108"/>
        <label>1</label>
    </ligand>
</feature>
<feature type="binding site" evidence="1">
    <location>
        <position position="186"/>
    </location>
    <ligand>
        <name>Ca(2+)</name>
        <dbReference type="ChEBI" id="CHEBI:29108"/>
        <label>1</label>
    </ligand>
</feature>
<feature type="binding site" evidence="1">
    <location>
        <position position="188"/>
    </location>
    <ligand>
        <name>Ca(2+)</name>
        <dbReference type="ChEBI" id="CHEBI:29108"/>
        <label>1</label>
    </ligand>
</feature>
<feature type="binding site" evidence="1">
    <location>
        <position position="272"/>
    </location>
    <ligand>
        <name>Ca(2+)</name>
        <dbReference type="ChEBI" id="CHEBI:29108"/>
        <label>2</label>
    </ligand>
</feature>
<feature type="binding site" evidence="1">
    <location>
        <position position="274"/>
    </location>
    <ligand>
        <name>Ca(2+)</name>
        <dbReference type="ChEBI" id="CHEBI:29108"/>
        <label>2</label>
    </ligand>
</feature>
<feature type="binding site" evidence="1">
    <location>
        <position position="277"/>
    </location>
    <ligand>
        <name>Ca(2+)</name>
        <dbReference type="ChEBI" id="CHEBI:29108"/>
        <label>2</label>
    </ligand>
</feature>
<accession>P20724</accession>
<keyword id="KW-0106">Calcium</keyword>
<keyword id="KW-0903">Direct protein sequencing</keyword>
<keyword id="KW-0378">Hydrolase</keyword>
<keyword id="KW-0479">Metal-binding</keyword>
<keyword id="KW-0645">Protease</keyword>
<keyword id="KW-0964">Secreted</keyword>
<keyword id="KW-0720">Serine protease</keyword>
<keyword id="KW-0732">Signal</keyword>
<keyword id="KW-0865">Zymogen</keyword>
<sequence length="378" mass="38793">MNKKMGKIVAGTALIISVAFSSSIAQAAEEAKEKYLIGFKEQEVMSQFVDQIDGDEYSISSQAEDVEIDLLHEFDFIPVLSVELDPEDVDALELDPAIAYIEEDAEVTTMQTVPWGINRVQAPIAQSRGFTGTGVRVAVLDTGISNHADLRIRGGASFVPGEPNISDGNGHGTQVAGTIAALNNSIGVLGVAPNVDLYGVKVLGASGSGSISGIAQGLQWAANNGMHIANMSLGSSAGSATMEQAVNQATASGVLVVAASGNSGAGNVGFPARYANAMAVGATDQNNNRATFSQYGAGLDIVAPGVGVQSTVPGNGYASFNGTSMATPHVAGVAALVKQKNPSWSNVQIRNHLKNTATNLGNTTQFGSGLVNAEAATR</sequence>
<dbReference type="EC" id="3.4.21.-"/>
<dbReference type="EMBL" id="M28537">
    <property type="protein sequence ID" value="AAA87324.1"/>
    <property type="molecule type" value="Genomic_DNA"/>
</dbReference>
<dbReference type="SMR" id="P20724"/>
<dbReference type="MEROPS" id="S08.157"/>
<dbReference type="GO" id="GO:0005576">
    <property type="term" value="C:extracellular region"/>
    <property type="evidence" value="ECO:0007669"/>
    <property type="project" value="UniProtKB-SubCell"/>
</dbReference>
<dbReference type="GO" id="GO:0046872">
    <property type="term" value="F:metal ion binding"/>
    <property type="evidence" value="ECO:0007669"/>
    <property type="project" value="UniProtKB-KW"/>
</dbReference>
<dbReference type="GO" id="GO:0004252">
    <property type="term" value="F:serine-type endopeptidase activity"/>
    <property type="evidence" value="ECO:0007669"/>
    <property type="project" value="InterPro"/>
</dbReference>
<dbReference type="GO" id="GO:0006508">
    <property type="term" value="P:proteolysis"/>
    <property type="evidence" value="ECO:0007669"/>
    <property type="project" value="UniProtKB-KW"/>
</dbReference>
<dbReference type="CDD" id="cd07477">
    <property type="entry name" value="Peptidases_S8_Subtilisin_subset"/>
    <property type="match status" value="1"/>
</dbReference>
<dbReference type="Gene3D" id="3.30.70.80">
    <property type="entry name" value="Peptidase S8 propeptide/proteinase inhibitor I9"/>
    <property type="match status" value="1"/>
</dbReference>
<dbReference type="Gene3D" id="3.40.50.200">
    <property type="entry name" value="Peptidase S8/S53 domain"/>
    <property type="match status" value="1"/>
</dbReference>
<dbReference type="InterPro" id="IPR000209">
    <property type="entry name" value="Peptidase_S8/S53_dom"/>
</dbReference>
<dbReference type="InterPro" id="IPR036852">
    <property type="entry name" value="Peptidase_S8/S53_dom_sf"/>
</dbReference>
<dbReference type="InterPro" id="IPR023827">
    <property type="entry name" value="Peptidase_S8_Asp-AS"/>
</dbReference>
<dbReference type="InterPro" id="IPR022398">
    <property type="entry name" value="Peptidase_S8_His-AS"/>
</dbReference>
<dbReference type="InterPro" id="IPR023828">
    <property type="entry name" value="Peptidase_S8_Ser-AS"/>
</dbReference>
<dbReference type="InterPro" id="IPR050131">
    <property type="entry name" value="Peptidase_S8_subtilisin-like"/>
</dbReference>
<dbReference type="InterPro" id="IPR015500">
    <property type="entry name" value="Peptidase_S8_subtilisin-rel"/>
</dbReference>
<dbReference type="InterPro" id="IPR010259">
    <property type="entry name" value="S8pro/Inhibitor_I9"/>
</dbReference>
<dbReference type="InterPro" id="IPR037045">
    <property type="entry name" value="S8pro/Inhibitor_I9_sf"/>
</dbReference>
<dbReference type="InterPro" id="IPR034202">
    <property type="entry name" value="Subtilisin_Carlsberg-like"/>
</dbReference>
<dbReference type="PANTHER" id="PTHR43806:SF11">
    <property type="entry name" value="CEREVISIN-RELATED"/>
    <property type="match status" value="1"/>
</dbReference>
<dbReference type="PANTHER" id="PTHR43806">
    <property type="entry name" value="PEPTIDASE S8"/>
    <property type="match status" value="1"/>
</dbReference>
<dbReference type="Pfam" id="PF05922">
    <property type="entry name" value="Inhibitor_I9"/>
    <property type="match status" value="1"/>
</dbReference>
<dbReference type="Pfam" id="PF00082">
    <property type="entry name" value="Peptidase_S8"/>
    <property type="match status" value="1"/>
</dbReference>
<dbReference type="PRINTS" id="PR00723">
    <property type="entry name" value="SUBTILISIN"/>
</dbReference>
<dbReference type="SUPFAM" id="SSF54897">
    <property type="entry name" value="Protease propeptides/inhibitors"/>
    <property type="match status" value="1"/>
</dbReference>
<dbReference type="SUPFAM" id="SSF52743">
    <property type="entry name" value="Subtilisin-like"/>
    <property type="match status" value="1"/>
</dbReference>
<dbReference type="PROSITE" id="PS51892">
    <property type="entry name" value="SUBTILASE"/>
    <property type="match status" value="1"/>
</dbReference>
<dbReference type="PROSITE" id="PS00136">
    <property type="entry name" value="SUBTILASE_ASP"/>
    <property type="match status" value="1"/>
</dbReference>
<dbReference type="PROSITE" id="PS00137">
    <property type="entry name" value="SUBTILASE_HIS"/>
    <property type="match status" value="1"/>
</dbReference>
<dbReference type="PROSITE" id="PS00138">
    <property type="entry name" value="SUBTILASE_SER"/>
    <property type="match status" value="1"/>
</dbReference>
<comment type="function">
    <text>Digests elastin efficiently, has a substrate preference for Ala in P1 position.</text>
</comment>
<comment type="cofactor">
    <cofactor evidence="1">
        <name>Ca(2+)</name>
        <dbReference type="ChEBI" id="CHEBI:29108"/>
    </cofactor>
    <text evidence="1">Binds 2 calcium ions per subunit.</text>
</comment>
<comment type="subcellular location">
    <subcellularLocation>
        <location>Secreted</location>
    </subcellularLocation>
</comment>
<comment type="similarity">
    <text evidence="5">Belongs to the peptidase S8 family.</text>
</comment>
<proteinExistence type="evidence at protein level"/>
<organism>
    <name type="scientific">Bacillus sp. (strain YaB)</name>
    <dbReference type="NCBI Taxonomy" id="72578"/>
    <lineage>
        <taxon>Bacteria</taxon>
        <taxon>Bacillati</taxon>
        <taxon>Bacillota</taxon>
        <taxon>Bacilli</taxon>
        <taxon>Bacillales</taxon>
        <taxon>Bacillaceae</taxon>
        <taxon>Bacillus</taxon>
    </lineage>
</organism>
<evidence type="ECO:0000250" key="1"/>
<evidence type="ECO:0000255" key="2"/>
<evidence type="ECO:0000255" key="3">
    <source>
        <dbReference type="PROSITE-ProRule" id="PRU01240"/>
    </source>
</evidence>
<evidence type="ECO:0000269" key="4">
    <source ref="2"/>
</evidence>
<evidence type="ECO:0000305" key="5"/>
<gene>
    <name type="primary">ale</name>
</gene>
<reference key="1">
    <citation type="journal article" date="1989" name="J. Bacteriol.">
        <title>Molecular cloning of the structural gene for alkaline elastase YaB, a new subtilisin produced by an alkalophilic Bacillus strain.</title>
        <authorList>
            <person name="Kaneko R."/>
            <person name="Koyama N."/>
            <person name="Tsai Y.-C."/>
            <person name="Juang R.-Y."/>
            <person name="Yoda K."/>
            <person name="Yamasaki M."/>
        </authorList>
    </citation>
    <scope>NUCLEOTIDE SEQUENCE [GENOMIC DNA]</scope>
</reference>
<reference key="2">
    <citation type="journal article" date="1986" name="Biochim. Biophys. Acta">
        <title>Characterization of an alkaline elastase from alkalophilic Bacillus Ya-B.</title>
        <authorList>
            <person name="Tsai Y.-C."/>
            <person name="Lin Y.-T."/>
            <person name="Li Y.-F."/>
            <person name="Yamasaki M."/>
            <person name="Tamura G."/>
        </authorList>
    </citation>
    <scope>PROTEIN SEQUENCE OF 111-164</scope>
</reference>